<gene>
    <name evidence="1" type="primary">rpmB</name>
    <name type="ordered locus">BSUIS_A1856</name>
</gene>
<feature type="chain" id="PRO_1000079840" description="Large ribosomal subunit protein bL28">
    <location>
        <begin position="1"/>
        <end position="97"/>
    </location>
</feature>
<organism>
    <name type="scientific">Brucella suis (strain ATCC 23445 / NCTC 10510)</name>
    <dbReference type="NCBI Taxonomy" id="470137"/>
    <lineage>
        <taxon>Bacteria</taxon>
        <taxon>Pseudomonadati</taxon>
        <taxon>Pseudomonadota</taxon>
        <taxon>Alphaproteobacteria</taxon>
        <taxon>Hyphomicrobiales</taxon>
        <taxon>Brucellaceae</taxon>
        <taxon>Brucella/Ochrobactrum group</taxon>
        <taxon>Brucella</taxon>
    </lineage>
</organism>
<accession>B0CJB7</accession>
<name>RL28_BRUSI</name>
<dbReference type="EMBL" id="CP000911">
    <property type="protein sequence ID" value="ABY38869.1"/>
    <property type="molecule type" value="Genomic_DNA"/>
</dbReference>
<dbReference type="RefSeq" id="WP_002965079.1">
    <property type="nucleotide sequence ID" value="NC_010169.1"/>
</dbReference>
<dbReference type="SMR" id="B0CJB7"/>
<dbReference type="GeneID" id="97534716"/>
<dbReference type="KEGG" id="bmt:BSUIS_A1856"/>
<dbReference type="HOGENOM" id="CLU_064548_4_2_5"/>
<dbReference type="Proteomes" id="UP000008545">
    <property type="component" value="Chromosome I"/>
</dbReference>
<dbReference type="GO" id="GO:0022625">
    <property type="term" value="C:cytosolic large ribosomal subunit"/>
    <property type="evidence" value="ECO:0007669"/>
    <property type="project" value="TreeGrafter"/>
</dbReference>
<dbReference type="GO" id="GO:0003735">
    <property type="term" value="F:structural constituent of ribosome"/>
    <property type="evidence" value="ECO:0007669"/>
    <property type="project" value="InterPro"/>
</dbReference>
<dbReference type="GO" id="GO:0006412">
    <property type="term" value="P:translation"/>
    <property type="evidence" value="ECO:0007669"/>
    <property type="project" value="UniProtKB-UniRule"/>
</dbReference>
<dbReference type="Gene3D" id="2.30.170.40">
    <property type="entry name" value="Ribosomal protein L28/L24"/>
    <property type="match status" value="1"/>
</dbReference>
<dbReference type="HAMAP" id="MF_00373">
    <property type="entry name" value="Ribosomal_bL28"/>
    <property type="match status" value="1"/>
</dbReference>
<dbReference type="InterPro" id="IPR026569">
    <property type="entry name" value="Ribosomal_bL28"/>
</dbReference>
<dbReference type="InterPro" id="IPR034704">
    <property type="entry name" value="Ribosomal_bL28/bL31-like_sf"/>
</dbReference>
<dbReference type="InterPro" id="IPR001383">
    <property type="entry name" value="Ribosomal_bL28_bact-type"/>
</dbReference>
<dbReference type="InterPro" id="IPR037147">
    <property type="entry name" value="Ribosomal_bL28_sf"/>
</dbReference>
<dbReference type="NCBIfam" id="TIGR00009">
    <property type="entry name" value="L28"/>
    <property type="match status" value="1"/>
</dbReference>
<dbReference type="PANTHER" id="PTHR13528">
    <property type="entry name" value="39S RIBOSOMAL PROTEIN L28, MITOCHONDRIAL"/>
    <property type="match status" value="1"/>
</dbReference>
<dbReference type="PANTHER" id="PTHR13528:SF2">
    <property type="entry name" value="LARGE RIBOSOMAL SUBUNIT PROTEIN BL28M"/>
    <property type="match status" value="1"/>
</dbReference>
<dbReference type="Pfam" id="PF00830">
    <property type="entry name" value="Ribosomal_L28"/>
    <property type="match status" value="1"/>
</dbReference>
<dbReference type="SUPFAM" id="SSF143800">
    <property type="entry name" value="L28p-like"/>
    <property type="match status" value="1"/>
</dbReference>
<evidence type="ECO:0000255" key="1">
    <source>
        <dbReference type="HAMAP-Rule" id="MF_00373"/>
    </source>
</evidence>
<evidence type="ECO:0000305" key="2"/>
<proteinExistence type="inferred from homology"/>
<protein>
    <recommendedName>
        <fullName evidence="1">Large ribosomal subunit protein bL28</fullName>
    </recommendedName>
    <alternativeName>
        <fullName evidence="2">50S ribosomal protein L28</fullName>
    </alternativeName>
</protein>
<comment type="similarity">
    <text evidence="1">Belongs to the bacterial ribosomal protein bL28 family.</text>
</comment>
<keyword id="KW-0687">Ribonucleoprotein</keyword>
<keyword id="KW-0689">Ribosomal protein</keyword>
<sequence>MSRACELTGKSVQYGNNVSHANNRTRRRFLPNLCNVTLISETLGQSYRLRISANALRSVEHRGGLDAFLVKSDDKELSQRARLLKRQIAKKQAEAAA</sequence>
<reference key="1">
    <citation type="submission" date="2007-12" db="EMBL/GenBank/DDBJ databases">
        <title>Brucella suis ATCC 23445 whole genome shotgun sequencing project.</title>
        <authorList>
            <person name="Setubal J.C."/>
            <person name="Bowns C."/>
            <person name="Boyle S."/>
            <person name="Crasta O.R."/>
            <person name="Czar M.J."/>
            <person name="Dharmanolla C."/>
            <person name="Gillespie J.J."/>
            <person name="Kenyon R.W."/>
            <person name="Lu J."/>
            <person name="Mane S."/>
            <person name="Mohapatra S."/>
            <person name="Nagrani S."/>
            <person name="Purkayastha A."/>
            <person name="Rajasimha H.K."/>
            <person name="Shallom J.M."/>
            <person name="Shallom S."/>
            <person name="Shukla M."/>
            <person name="Snyder E.E."/>
            <person name="Sobral B.W."/>
            <person name="Wattam A.R."/>
            <person name="Will R."/>
            <person name="Williams K."/>
            <person name="Yoo H."/>
            <person name="Bruce D."/>
            <person name="Detter C."/>
            <person name="Munk C."/>
            <person name="Brettin T.S."/>
        </authorList>
    </citation>
    <scope>NUCLEOTIDE SEQUENCE [LARGE SCALE GENOMIC DNA]</scope>
    <source>
        <strain>ATCC 23445 / NCTC 10510</strain>
    </source>
</reference>